<feature type="chain" id="PRO_0000359923" description="Putative RNase YutE">
    <location>
        <begin position="1"/>
        <end position="144"/>
    </location>
</feature>
<feature type="short sequence motif" description="RX(4)HXY motif" evidence="1">
    <location>
        <begin position="96"/>
        <end position="103"/>
    </location>
</feature>
<feature type="active site" evidence="1">
    <location>
        <position position="96"/>
    </location>
</feature>
<feature type="helix" evidence="4">
    <location>
        <begin position="6"/>
        <end position="23"/>
    </location>
</feature>
<feature type="strand" evidence="4">
    <location>
        <begin position="29"/>
        <end position="31"/>
    </location>
</feature>
<feature type="helix" evidence="4">
    <location>
        <begin position="32"/>
        <end position="59"/>
    </location>
</feature>
<feature type="helix" evidence="4">
    <location>
        <begin position="68"/>
        <end position="70"/>
    </location>
</feature>
<feature type="helix" evidence="4">
    <location>
        <begin position="71"/>
        <end position="77"/>
    </location>
</feature>
<feature type="helix" evidence="4">
    <location>
        <begin position="83"/>
        <end position="93"/>
    </location>
</feature>
<feature type="helix" evidence="4">
    <location>
        <begin position="96"/>
        <end position="100"/>
    </location>
</feature>
<feature type="helix" evidence="4">
    <location>
        <begin position="103"/>
        <end position="105"/>
    </location>
</feature>
<feature type="helix" evidence="4">
    <location>
        <begin position="108"/>
        <end position="117"/>
    </location>
</feature>
<feature type="helix" evidence="4">
    <location>
        <begin position="119"/>
        <end position="137"/>
    </location>
</feature>
<feature type="turn" evidence="4">
    <location>
        <begin position="138"/>
        <end position="140"/>
    </location>
</feature>
<comment type="function">
    <text evidence="3">Probable toxic component of a putative type VII toxin-antitoxin (TA) system, probably an RNase. Probably neutralized by cognate antitoxin YutD.</text>
</comment>
<comment type="subunit">
    <text evidence="3">Homodimer, probably forms a complex with cognate antitoxin YutD.</text>
</comment>
<comment type="similarity">
    <text evidence="3">Belongs to the HepT RNase toxin family.</text>
</comment>
<accession>O32126</accession>
<gene>
    <name type="primary">yutE</name>
    <name evidence="2" type="synonym">hepT</name>
    <name type="ordered locus">BSU32300</name>
</gene>
<proteinExistence type="evidence at protein level"/>
<protein>
    <recommendedName>
        <fullName evidence="2">Putative RNase YutE</fullName>
        <ecNumber evidence="2">3.1.-.-</ecNumber>
    </recommendedName>
    <alternativeName>
        <fullName evidence="3">Putative toxin HepT</fullName>
    </alternativeName>
</protein>
<dbReference type="EC" id="3.1.-.-" evidence="2"/>
<dbReference type="EMBL" id="AL009126">
    <property type="protein sequence ID" value="CAB15220.1"/>
    <property type="molecule type" value="Genomic_DNA"/>
</dbReference>
<dbReference type="PIR" id="G70023">
    <property type="entry name" value="G70023"/>
</dbReference>
<dbReference type="RefSeq" id="NP_391110.1">
    <property type="nucleotide sequence ID" value="NC_000964.3"/>
</dbReference>
<dbReference type="RefSeq" id="WP_003228684.1">
    <property type="nucleotide sequence ID" value="NZ_OZ025638.1"/>
</dbReference>
<dbReference type="PDB" id="1YLM">
    <property type="method" value="X-ray"/>
    <property type="resolution" value="1.83 A"/>
    <property type="chains" value="A/B=1-144"/>
</dbReference>
<dbReference type="PDBsum" id="1YLM"/>
<dbReference type="SMR" id="O32126"/>
<dbReference type="FunCoup" id="O32126">
    <property type="interactions" value="18"/>
</dbReference>
<dbReference type="STRING" id="224308.BSU32300"/>
<dbReference type="PaxDb" id="224308-BSU32300"/>
<dbReference type="EnsemblBacteria" id="CAB15220">
    <property type="protein sequence ID" value="CAB15220"/>
    <property type="gene ID" value="BSU_32300"/>
</dbReference>
<dbReference type="GeneID" id="938483"/>
<dbReference type="KEGG" id="bsu:BSU32300"/>
<dbReference type="PATRIC" id="fig|224308.179.peg.3497"/>
<dbReference type="eggNOG" id="COG2445">
    <property type="taxonomic scope" value="Bacteria"/>
</dbReference>
<dbReference type="InParanoid" id="O32126"/>
<dbReference type="OrthoDB" id="2375467at2"/>
<dbReference type="PhylomeDB" id="O32126"/>
<dbReference type="BioCyc" id="BSUB:BSU32300-MONOMER"/>
<dbReference type="EvolutionaryTrace" id="O32126"/>
<dbReference type="Proteomes" id="UP000001570">
    <property type="component" value="Chromosome"/>
</dbReference>
<dbReference type="GO" id="GO:0110001">
    <property type="term" value="C:toxin-antitoxin complex"/>
    <property type="evidence" value="ECO:0007669"/>
    <property type="project" value="InterPro"/>
</dbReference>
<dbReference type="GO" id="GO:0004540">
    <property type="term" value="F:RNA nuclease activity"/>
    <property type="evidence" value="ECO:0007669"/>
    <property type="project" value="InterPro"/>
</dbReference>
<dbReference type="Gene3D" id="1.20.120.580">
    <property type="entry name" value="bsu32300-like"/>
    <property type="match status" value="1"/>
</dbReference>
<dbReference type="InterPro" id="IPR008201">
    <property type="entry name" value="HepT-like"/>
</dbReference>
<dbReference type="InterPro" id="IPR037038">
    <property type="entry name" value="HepT-like_sf"/>
</dbReference>
<dbReference type="InterPro" id="IPR052379">
    <property type="entry name" value="Type_VII_TA_RNase"/>
</dbReference>
<dbReference type="PANTHER" id="PTHR33397:SF5">
    <property type="entry name" value="RNASE YUTE-RELATED"/>
    <property type="match status" value="1"/>
</dbReference>
<dbReference type="PANTHER" id="PTHR33397">
    <property type="entry name" value="UPF0331 PROTEIN YUTE"/>
    <property type="match status" value="1"/>
</dbReference>
<dbReference type="Pfam" id="PF01934">
    <property type="entry name" value="HepT-like"/>
    <property type="match status" value="1"/>
</dbReference>
<organism>
    <name type="scientific">Bacillus subtilis (strain 168)</name>
    <dbReference type="NCBI Taxonomy" id="224308"/>
    <lineage>
        <taxon>Bacteria</taxon>
        <taxon>Bacillati</taxon>
        <taxon>Bacillota</taxon>
        <taxon>Bacilli</taxon>
        <taxon>Bacillales</taxon>
        <taxon>Bacillaceae</taxon>
        <taxon>Bacillus</taxon>
    </lineage>
</organism>
<sequence>MYFVDRSKIEKTLGFFEHQLALFDSQTDWQSEIGELALQRIGHLLIECILDTGNDMIDGFIMRDPGSYDDIMDILVDEKVVTEKEGDELKKLIAYRKTLVQQYLLADSGELYRLIKAHQTALQDFPKRIRSYLETELGPVSAFK</sequence>
<name>YUTE_BACSU</name>
<evidence type="ECO:0000250" key="1">
    <source>
        <dbReference type="UniProtKB" id="A0A0B0QJR1"/>
    </source>
</evidence>
<evidence type="ECO:0000250" key="2">
    <source>
        <dbReference type="UniProtKB" id="Q8ECH6"/>
    </source>
</evidence>
<evidence type="ECO:0000305" key="3"/>
<evidence type="ECO:0007829" key="4">
    <source>
        <dbReference type="PDB" id="1YLM"/>
    </source>
</evidence>
<reference key="1">
    <citation type="journal article" date="1997" name="Nature">
        <title>The complete genome sequence of the Gram-positive bacterium Bacillus subtilis.</title>
        <authorList>
            <person name="Kunst F."/>
            <person name="Ogasawara N."/>
            <person name="Moszer I."/>
            <person name="Albertini A.M."/>
            <person name="Alloni G."/>
            <person name="Azevedo V."/>
            <person name="Bertero M.G."/>
            <person name="Bessieres P."/>
            <person name="Bolotin A."/>
            <person name="Borchert S."/>
            <person name="Borriss R."/>
            <person name="Boursier L."/>
            <person name="Brans A."/>
            <person name="Braun M."/>
            <person name="Brignell S.C."/>
            <person name="Bron S."/>
            <person name="Brouillet S."/>
            <person name="Bruschi C.V."/>
            <person name="Caldwell B."/>
            <person name="Capuano V."/>
            <person name="Carter N.M."/>
            <person name="Choi S.-K."/>
            <person name="Codani J.-J."/>
            <person name="Connerton I.F."/>
            <person name="Cummings N.J."/>
            <person name="Daniel R.A."/>
            <person name="Denizot F."/>
            <person name="Devine K.M."/>
            <person name="Duesterhoeft A."/>
            <person name="Ehrlich S.D."/>
            <person name="Emmerson P.T."/>
            <person name="Entian K.-D."/>
            <person name="Errington J."/>
            <person name="Fabret C."/>
            <person name="Ferrari E."/>
            <person name="Foulger D."/>
            <person name="Fritz C."/>
            <person name="Fujita M."/>
            <person name="Fujita Y."/>
            <person name="Fuma S."/>
            <person name="Galizzi A."/>
            <person name="Galleron N."/>
            <person name="Ghim S.-Y."/>
            <person name="Glaser P."/>
            <person name="Goffeau A."/>
            <person name="Golightly E.J."/>
            <person name="Grandi G."/>
            <person name="Guiseppi G."/>
            <person name="Guy B.J."/>
            <person name="Haga K."/>
            <person name="Haiech J."/>
            <person name="Harwood C.R."/>
            <person name="Henaut A."/>
            <person name="Hilbert H."/>
            <person name="Holsappel S."/>
            <person name="Hosono S."/>
            <person name="Hullo M.-F."/>
            <person name="Itaya M."/>
            <person name="Jones L.-M."/>
            <person name="Joris B."/>
            <person name="Karamata D."/>
            <person name="Kasahara Y."/>
            <person name="Klaerr-Blanchard M."/>
            <person name="Klein C."/>
            <person name="Kobayashi Y."/>
            <person name="Koetter P."/>
            <person name="Koningstein G."/>
            <person name="Krogh S."/>
            <person name="Kumano M."/>
            <person name="Kurita K."/>
            <person name="Lapidus A."/>
            <person name="Lardinois S."/>
            <person name="Lauber J."/>
            <person name="Lazarevic V."/>
            <person name="Lee S.-M."/>
            <person name="Levine A."/>
            <person name="Liu H."/>
            <person name="Masuda S."/>
            <person name="Mauel C."/>
            <person name="Medigue C."/>
            <person name="Medina N."/>
            <person name="Mellado R.P."/>
            <person name="Mizuno M."/>
            <person name="Moestl D."/>
            <person name="Nakai S."/>
            <person name="Noback M."/>
            <person name="Noone D."/>
            <person name="O'Reilly M."/>
            <person name="Ogawa K."/>
            <person name="Ogiwara A."/>
            <person name="Oudega B."/>
            <person name="Park S.-H."/>
            <person name="Parro V."/>
            <person name="Pohl T.M."/>
            <person name="Portetelle D."/>
            <person name="Porwollik S."/>
            <person name="Prescott A.M."/>
            <person name="Presecan E."/>
            <person name="Pujic P."/>
            <person name="Purnelle B."/>
            <person name="Rapoport G."/>
            <person name="Rey M."/>
            <person name="Reynolds S."/>
            <person name="Rieger M."/>
            <person name="Rivolta C."/>
            <person name="Rocha E."/>
            <person name="Roche B."/>
            <person name="Rose M."/>
            <person name="Sadaie Y."/>
            <person name="Sato T."/>
            <person name="Scanlan E."/>
            <person name="Schleich S."/>
            <person name="Schroeter R."/>
            <person name="Scoffone F."/>
            <person name="Sekiguchi J."/>
            <person name="Sekowska A."/>
            <person name="Seror S.J."/>
            <person name="Serror P."/>
            <person name="Shin B.-S."/>
            <person name="Soldo B."/>
            <person name="Sorokin A."/>
            <person name="Tacconi E."/>
            <person name="Takagi T."/>
            <person name="Takahashi H."/>
            <person name="Takemaru K."/>
            <person name="Takeuchi M."/>
            <person name="Tamakoshi A."/>
            <person name="Tanaka T."/>
            <person name="Terpstra P."/>
            <person name="Tognoni A."/>
            <person name="Tosato V."/>
            <person name="Uchiyama S."/>
            <person name="Vandenbol M."/>
            <person name="Vannier F."/>
            <person name="Vassarotti A."/>
            <person name="Viari A."/>
            <person name="Wambutt R."/>
            <person name="Wedler E."/>
            <person name="Wedler H."/>
            <person name="Weitzenegger T."/>
            <person name="Winters P."/>
            <person name="Wipat A."/>
            <person name="Yamamoto H."/>
            <person name="Yamane K."/>
            <person name="Yasumoto K."/>
            <person name="Yata K."/>
            <person name="Yoshida K."/>
            <person name="Yoshikawa H.-F."/>
            <person name="Zumstein E."/>
            <person name="Yoshikawa H."/>
            <person name="Danchin A."/>
        </authorList>
    </citation>
    <scope>NUCLEOTIDE SEQUENCE [LARGE SCALE GENOMIC DNA]</scope>
    <source>
        <strain>168</strain>
    </source>
</reference>
<reference key="2">
    <citation type="submission" date="2005-03" db="PDB data bank">
        <title>Hypothetical cytosolic protein yutE from Bacillus subtilis.</title>
        <authorList>
            <consortium name="Midwest center for structural genomics (MCSG)"/>
        </authorList>
    </citation>
    <scope>X-RAY CRYSTALLOGRAPHY (1.83 ANGSTROMS)</scope>
</reference>
<keyword id="KW-0002">3D-structure</keyword>
<keyword id="KW-0378">Hydrolase</keyword>
<keyword id="KW-0540">Nuclease</keyword>
<keyword id="KW-1185">Reference proteome</keyword>
<keyword id="KW-1277">Toxin-antitoxin system</keyword>